<keyword id="KW-0489">Methyltransferase</keyword>
<keyword id="KW-1185">Reference proteome</keyword>
<keyword id="KW-0949">S-adenosyl-L-methionine</keyword>
<keyword id="KW-0808">Transferase</keyword>
<feature type="chain" id="PRO_0000156117" description="Diphthine synthase">
    <location>
        <begin position="1"/>
        <end position="266"/>
    </location>
</feature>
<feature type="binding site" evidence="1">
    <location>
        <position position="9"/>
    </location>
    <ligand>
        <name>S-adenosyl-L-methionine</name>
        <dbReference type="ChEBI" id="CHEBI:59789"/>
    </ligand>
</feature>
<feature type="binding site" evidence="1">
    <location>
        <position position="84"/>
    </location>
    <ligand>
        <name>S-adenosyl-L-methionine</name>
        <dbReference type="ChEBI" id="CHEBI:59789"/>
    </ligand>
</feature>
<feature type="binding site" evidence="1">
    <location>
        <position position="87"/>
    </location>
    <ligand>
        <name>S-adenosyl-L-methionine</name>
        <dbReference type="ChEBI" id="CHEBI:59789"/>
    </ligand>
</feature>
<feature type="binding site" evidence="1">
    <location>
        <begin position="112"/>
        <end position="113"/>
    </location>
    <ligand>
        <name>S-adenosyl-L-methionine</name>
        <dbReference type="ChEBI" id="CHEBI:59789"/>
    </ligand>
</feature>
<feature type="binding site" evidence="1">
    <location>
        <position position="169"/>
    </location>
    <ligand>
        <name>S-adenosyl-L-methionine</name>
        <dbReference type="ChEBI" id="CHEBI:59789"/>
    </ligand>
</feature>
<feature type="binding site" evidence="1">
    <location>
        <position position="210"/>
    </location>
    <ligand>
        <name>S-adenosyl-L-methionine</name>
        <dbReference type="ChEBI" id="CHEBI:59789"/>
    </ligand>
</feature>
<feature type="binding site" evidence="1">
    <location>
        <position position="235"/>
    </location>
    <ligand>
        <name>S-adenosyl-L-methionine</name>
        <dbReference type="ChEBI" id="CHEBI:59789"/>
    </ligand>
</feature>
<gene>
    <name evidence="1" type="primary">dphB</name>
    <name type="ordered locus">MA_1370</name>
</gene>
<accession>Q8TR14</accession>
<name>DPHB_METAC</name>
<proteinExistence type="inferred from homology"/>
<reference key="1">
    <citation type="journal article" date="2002" name="Genome Res.">
        <title>The genome of Methanosarcina acetivorans reveals extensive metabolic and physiological diversity.</title>
        <authorList>
            <person name="Galagan J.E."/>
            <person name="Nusbaum C."/>
            <person name="Roy A."/>
            <person name="Endrizzi M.G."/>
            <person name="Macdonald P."/>
            <person name="FitzHugh W."/>
            <person name="Calvo S."/>
            <person name="Engels R."/>
            <person name="Smirnov S."/>
            <person name="Atnoor D."/>
            <person name="Brown A."/>
            <person name="Allen N."/>
            <person name="Naylor J."/>
            <person name="Stange-Thomann N."/>
            <person name="DeArellano K."/>
            <person name="Johnson R."/>
            <person name="Linton L."/>
            <person name="McEwan P."/>
            <person name="McKernan K."/>
            <person name="Talamas J."/>
            <person name="Tirrell A."/>
            <person name="Ye W."/>
            <person name="Zimmer A."/>
            <person name="Barber R.D."/>
            <person name="Cann I."/>
            <person name="Graham D.E."/>
            <person name="Grahame D.A."/>
            <person name="Guss A.M."/>
            <person name="Hedderich R."/>
            <person name="Ingram-Smith C."/>
            <person name="Kuettner H.C."/>
            <person name="Krzycki J.A."/>
            <person name="Leigh J.A."/>
            <person name="Li W."/>
            <person name="Liu J."/>
            <person name="Mukhopadhyay B."/>
            <person name="Reeve J.N."/>
            <person name="Smith K."/>
            <person name="Springer T.A."/>
            <person name="Umayam L.A."/>
            <person name="White O."/>
            <person name="White R.H."/>
            <person name="de Macario E.C."/>
            <person name="Ferry J.G."/>
            <person name="Jarrell K.F."/>
            <person name="Jing H."/>
            <person name="Macario A.J.L."/>
            <person name="Paulsen I.T."/>
            <person name="Pritchett M."/>
            <person name="Sowers K.R."/>
            <person name="Swanson R.V."/>
            <person name="Zinder S.H."/>
            <person name="Lander E."/>
            <person name="Metcalf W.W."/>
            <person name="Birren B."/>
        </authorList>
    </citation>
    <scope>NUCLEOTIDE SEQUENCE [LARGE SCALE GENOMIC DNA]</scope>
    <source>
        <strain>ATCC 35395 / DSM 2834 / JCM 12185 / C2A</strain>
    </source>
</reference>
<sequence>MLTFIGLGLFDEYDISLKGLEAVREADLVYAEFYTSCLMGTNPEKMEKLYGKKVHLLSREDVEQQPDWLDKAKDKNVAFLTGGDTMVSTTHVDLRLRAEKLGIETHLIHGASIASAVSGLTGLQNYRFGKSASIPYPYESRRGAIIISETPYDTIKQNSELGLHTMIFLDIDKDKGYMTANHALELLLEVEKRRGEGIMERAVAVGIARAGSEKPVVKADYAESLKDFDFGNPLHILVVPGKLHFLEAEALVKLAAGPGKIMEETE</sequence>
<dbReference type="EC" id="2.1.1.98" evidence="1"/>
<dbReference type="EMBL" id="AE010299">
    <property type="protein sequence ID" value="AAM04786.1"/>
    <property type="molecule type" value="Genomic_DNA"/>
</dbReference>
<dbReference type="RefSeq" id="WP_011021388.1">
    <property type="nucleotide sequence ID" value="NC_003552.1"/>
</dbReference>
<dbReference type="SMR" id="Q8TR14"/>
<dbReference type="FunCoup" id="Q8TR14">
    <property type="interactions" value="188"/>
</dbReference>
<dbReference type="STRING" id="188937.MA_1370"/>
<dbReference type="EnsemblBacteria" id="AAM04786">
    <property type="protein sequence ID" value="AAM04786"/>
    <property type="gene ID" value="MA_1370"/>
</dbReference>
<dbReference type="GeneID" id="1473258"/>
<dbReference type="KEGG" id="mac:MA_1370"/>
<dbReference type="HOGENOM" id="CLU_066040_0_0_2"/>
<dbReference type="InParanoid" id="Q8TR14"/>
<dbReference type="OrthoDB" id="39139at2157"/>
<dbReference type="PhylomeDB" id="Q8TR14"/>
<dbReference type="UniPathway" id="UPA00559"/>
<dbReference type="Proteomes" id="UP000002487">
    <property type="component" value="Chromosome"/>
</dbReference>
<dbReference type="GO" id="GO:0004164">
    <property type="term" value="F:diphthine synthase activity"/>
    <property type="evidence" value="ECO:0007669"/>
    <property type="project" value="UniProtKB-UniRule"/>
</dbReference>
<dbReference type="GO" id="GO:0032259">
    <property type="term" value="P:methylation"/>
    <property type="evidence" value="ECO:0007669"/>
    <property type="project" value="UniProtKB-KW"/>
</dbReference>
<dbReference type="GO" id="GO:0017183">
    <property type="term" value="P:protein histidyl modification to diphthamide"/>
    <property type="evidence" value="ECO:0007669"/>
    <property type="project" value="UniProtKB-UniRule"/>
</dbReference>
<dbReference type="CDD" id="cd11647">
    <property type="entry name" value="DHP5_DphB"/>
    <property type="match status" value="1"/>
</dbReference>
<dbReference type="Gene3D" id="3.40.1010.10">
    <property type="entry name" value="Cobalt-precorrin-4 Transmethylase, Domain 1"/>
    <property type="match status" value="1"/>
</dbReference>
<dbReference type="Gene3D" id="3.30.950.10">
    <property type="entry name" value="Methyltransferase, Cobalt-precorrin-4 Transmethylase, Domain 2"/>
    <property type="match status" value="1"/>
</dbReference>
<dbReference type="HAMAP" id="MF_01084">
    <property type="entry name" value="Diphthine_synth"/>
    <property type="match status" value="1"/>
</dbReference>
<dbReference type="InterPro" id="IPR000878">
    <property type="entry name" value="4pyrrol_Mease"/>
</dbReference>
<dbReference type="InterPro" id="IPR035996">
    <property type="entry name" value="4pyrrol_Methylase_sf"/>
</dbReference>
<dbReference type="InterPro" id="IPR014777">
    <property type="entry name" value="4pyrrole_Mease_sub1"/>
</dbReference>
<dbReference type="InterPro" id="IPR014776">
    <property type="entry name" value="4pyrrole_Mease_sub2"/>
</dbReference>
<dbReference type="InterPro" id="IPR004551">
    <property type="entry name" value="Dphthn_synthase"/>
</dbReference>
<dbReference type="NCBIfam" id="TIGR00522">
    <property type="entry name" value="dph5"/>
    <property type="match status" value="1"/>
</dbReference>
<dbReference type="PANTHER" id="PTHR10882:SF0">
    <property type="entry name" value="DIPHTHINE METHYL ESTER SYNTHASE"/>
    <property type="match status" value="1"/>
</dbReference>
<dbReference type="PANTHER" id="PTHR10882">
    <property type="entry name" value="DIPHTHINE SYNTHASE"/>
    <property type="match status" value="1"/>
</dbReference>
<dbReference type="Pfam" id="PF00590">
    <property type="entry name" value="TP_methylase"/>
    <property type="match status" value="1"/>
</dbReference>
<dbReference type="PIRSF" id="PIRSF036432">
    <property type="entry name" value="Diphthine_synth"/>
    <property type="match status" value="1"/>
</dbReference>
<dbReference type="SUPFAM" id="SSF53790">
    <property type="entry name" value="Tetrapyrrole methylase"/>
    <property type="match status" value="1"/>
</dbReference>
<comment type="function">
    <text evidence="1">S-adenosyl-L-methionine-dependent methyltransferase that catalyzes the trimethylation of the amino group of the modified target histidine residue in translation elongation factor 2 (EF-2), to form an intermediate called diphthine. The three successive methylation reactions represent the second step of diphthamide biosynthesis.</text>
</comment>
<comment type="catalytic activity">
    <reaction evidence="1">
        <text>2-[(3S)-amino-3-carboxypropyl]-L-histidyl-[translation elongation factor 2] + 3 S-adenosyl-L-methionine = diphthine-[translation elongation factor 2] + 3 S-adenosyl-L-homocysteine + 3 H(+)</text>
        <dbReference type="Rhea" id="RHEA:36415"/>
        <dbReference type="Rhea" id="RHEA-COMP:9749"/>
        <dbReference type="Rhea" id="RHEA-COMP:10172"/>
        <dbReference type="ChEBI" id="CHEBI:15378"/>
        <dbReference type="ChEBI" id="CHEBI:57856"/>
        <dbReference type="ChEBI" id="CHEBI:59789"/>
        <dbReference type="ChEBI" id="CHEBI:73995"/>
        <dbReference type="ChEBI" id="CHEBI:82696"/>
        <dbReference type="EC" id="2.1.1.98"/>
    </reaction>
</comment>
<comment type="pathway">
    <text evidence="1">Protein modification; peptidyl-diphthamide biosynthesis.</text>
</comment>
<comment type="subunit">
    <text evidence="1">Homodimer.</text>
</comment>
<comment type="similarity">
    <text evidence="1">Belongs to the diphthine synthase family.</text>
</comment>
<evidence type="ECO:0000255" key="1">
    <source>
        <dbReference type="HAMAP-Rule" id="MF_01084"/>
    </source>
</evidence>
<organism>
    <name type="scientific">Methanosarcina acetivorans (strain ATCC 35395 / DSM 2834 / JCM 12185 / C2A)</name>
    <dbReference type="NCBI Taxonomy" id="188937"/>
    <lineage>
        <taxon>Archaea</taxon>
        <taxon>Methanobacteriati</taxon>
        <taxon>Methanobacteriota</taxon>
        <taxon>Stenosarchaea group</taxon>
        <taxon>Methanomicrobia</taxon>
        <taxon>Methanosarcinales</taxon>
        <taxon>Methanosarcinaceae</taxon>
        <taxon>Methanosarcina</taxon>
    </lineage>
</organism>
<protein>
    <recommendedName>
        <fullName evidence="1">Diphthine synthase</fullName>
        <ecNumber evidence="1">2.1.1.98</ecNumber>
    </recommendedName>
    <alternativeName>
        <fullName evidence="1">Diphthamide biosynthesis methyltransferase</fullName>
    </alternativeName>
</protein>